<gene>
    <name evidence="1" type="primary">rimO</name>
    <name type="ordered locus">mlr0499</name>
</gene>
<accession>Q98MN9</accession>
<organism>
    <name type="scientific">Mesorhizobium japonicum (strain LMG 29417 / CECT 9101 / MAFF 303099)</name>
    <name type="common">Mesorhizobium loti (strain MAFF 303099)</name>
    <dbReference type="NCBI Taxonomy" id="266835"/>
    <lineage>
        <taxon>Bacteria</taxon>
        <taxon>Pseudomonadati</taxon>
        <taxon>Pseudomonadota</taxon>
        <taxon>Alphaproteobacteria</taxon>
        <taxon>Hyphomicrobiales</taxon>
        <taxon>Phyllobacteriaceae</taxon>
        <taxon>Mesorhizobium</taxon>
    </lineage>
</organism>
<feature type="chain" id="PRO_0000374964" description="Ribosomal protein uS12 methylthiotransferase RimO">
    <location>
        <begin position="1"/>
        <end position="437"/>
    </location>
</feature>
<feature type="domain" description="MTTase N-terminal" evidence="1">
    <location>
        <begin position="4"/>
        <end position="114"/>
    </location>
</feature>
<feature type="domain" description="Radical SAM core" evidence="2">
    <location>
        <begin position="131"/>
        <end position="369"/>
    </location>
</feature>
<feature type="domain" description="TRAM" evidence="1">
    <location>
        <begin position="372"/>
        <end position="437"/>
    </location>
</feature>
<feature type="binding site" evidence="1">
    <location>
        <position position="13"/>
    </location>
    <ligand>
        <name>[4Fe-4S] cluster</name>
        <dbReference type="ChEBI" id="CHEBI:49883"/>
        <label>1</label>
    </ligand>
</feature>
<feature type="binding site" evidence="1">
    <location>
        <position position="49"/>
    </location>
    <ligand>
        <name>[4Fe-4S] cluster</name>
        <dbReference type="ChEBI" id="CHEBI:49883"/>
        <label>1</label>
    </ligand>
</feature>
<feature type="binding site" evidence="1">
    <location>
        <position position="78"/>
    </location>
    <ligand>
        <name>[4Fe-4S] cluster</name>
        <dbReference type="ChEBI" id="CHEBI:49883"/>
        <label>1</label>
    </ligand>
</feature>
<feature type="binding site" evidence="1">
    <location>
        <position position="145"/>
    </location>
    <ligand>
        <name>[4Fe-4S] cluster</name>
        <dbReference type="ChEBI" id="CHEBI:49883"/>
        <label>2</label>
        <note>4Fe-4S-S-AdoMet</note>
    </ligand>
</feature>
<feature type="binding site" evidence="1">
    <location>
        <position position="149"/>
    </location>
    <ligand>
        <name>[4Fe-4S] cluster</name>
        <dbReference type="ChEBI" id="CHEBI:49883"/>
        <label>2</label>
        <note>4Fe-4S-S-AdoMet</note>
    </ligand>
</feature>
<feature type="binding site" evidence="1">
    <location>
        <position position="152"/>
    </location>
    <ligand>
        <name>[4Fe-4S] cluster</name>
        <dbReference type="ChEBI" id="CHEBI:49883"/>
        <label>2</label>
        <note>4Fe-4S-S-AdoMet</note>
    </ligand>
</feature>
<comment type="function">
    <text evidence="1">Catalyzes the methylthiolation of an aspartic acid residue of ribosomal protein uS12.</text>
</comment>
<comment type="catalytic activity">
    <reaction evidence="1">
        <text>L-aspartate(89)-[ribosomal protein uS12]-hydrogen + (sulfur carrier)-SH + AH2 + 2 S-adenosyl-L-methionine = 3-methylsulfanyl-L-aspartate(89)-[ribosomal protein uS12]-hydrogen + (sulfur carrier)-H + 5'-deoxyadenosine + L-methionine + A + S-adenosyl-L-homocysteine + 2 H(+)</text>
        <dbReference type="Rhea" id="RHEA:37087"/>
        <dbReference type="Rhea" id="RHEA-COMP:10460"/>
        <dbReference type="Rhea" id="RHEA-COMP:10461"/>
        <dbReference type="Rhea" id="RHEA-COMP:14737"/>
        <dbReference type="Rhea" id="RHEA-COMP:14739"/>
        <dbReference type="ChEBI" id="CHEBI:13193"/>
        <dbReference type="ChEBI" id="CHEBI:15378"/>
        <dbReference type="ChEBI" id="CHEBI:17319"/>
        <dbReference type="ChEBI" id="CHEBI:17499"/>
        <dbReference type="ChEBI" id="CHEBI:29917"/>
        <dbReference type="ChEBI" id="CHEBI:29961"/>
        <dbReference type="ChEBI" id="CHEBI:57844"/>
        <dbReference type="ChEBI" id="CHEBI:57856"/>
        <dbReference type="ChEBI" id="CHEBI:59789"/>
        <dbReference type="ChEBI" id="CHEBI:64428"/>
        <dbReference type="ChEBI" id="CHEBI:73599"/>
        <dbReference type="EC" id="2.8.4.4"/>
    </reaction>
</comment>
<comment type="cofactor">
    <cofactor evidence="1">
        <name>[4Fe-4S] cluster</name>
        <dbReference type="ChEBI" id="CHEBI:49883"/>
    </cofactor>
    <text evidence="1">Binds 2 [4Fe-4S] clusters. One cluster is coordinated with 3 cysteines and an exchangeable S-adenosyl-L-methionine.</text>
</comment>
<comment type="subcellular location">
    <subcellularLocation>
        <location evidence="1">Cytoplasm</location>
    </subcellularLocation>
</comment>
<comment type="similarity">
    <text evidence="1">Belongs to the methylthiotransferase family. RimO subfamily.</text>
</comment>
<keyword id="KW-0004">4Fe-4S</keyword>
<keyword id="KW-0963">Cytoplasm</keyword>
<keyword id="KW-0408">Iron</keyword>
<keyword id="KW-0411">Iron-sulfur</keyword>
<keyword id="KW-0479">Metal-binding</keyword>
<keyword id="KW-0949">S-adenosyl-L-methionine</keyword>
<keyword id="KW-0808">Transferase</keyword>
<evidence type="ECO:0000255" key="1">
    <source>
        <dbReference type="HAMAP-Rule" id="MF_01865"/>
    </source>
</evidence>
<evidence type="ECO:0000255" key="2">
    <source>
        <dbReference type="PROSITE-ProRule" id="PRU01266"/>
    </source>
</evidence>
<reference key="1">
    <citation type="journal article" date="2000" name="DNA Res.">
        <title>Complete genome structure of the nitrogen-fixing symbiotic bacterium Mesorhizobium loti.</title>
        <authorList>
            <person name="Kaneko T."/>
            <person name="Nakamura Y."/>
            <person name="Sato S."/>
            <person name="Asamizu E."/>
            <person name="Kato T."/>
            <person name="Sasamoto S."/>
            <person name="Watanabe A."/>
            <person name="Idesawa K."/>
            <person name="Ishikawa A."/>
            <person name="Kawashima K."/>
            <person name="Kimura T."/>
            <person name="Kishida Y."/>
            <person name="Kiyokawa C."/>
            <person name="Kohara M."/>
            <person name="Matsumoto M."/>
            <person name="Matsuno A."/>
            <person name="Mochizuki Y."/>
            <person name="Nakayama S."/>
            <person name="Nakazaki N."/>
            <person name="Shimpo S."/>
            <person name="Sugimoto M."/>
            <person name="Takeuchi C."/>
            <person name="Yamada M."/>
            <person name="Tabata S."/>
        </authorList>
    </citation>
    <scope>NUCLEOTIDE SEQUENCE [LARGE SCALE GENOMIC DNA]</scope>
    <source>
        <strain>LMG 29417 / CECT 9101 / MAFF 303099</strain>
    </source>
</reference>
<sequence length="437" mass="48552">MSAPRVSFVSLGCPKALVDSERIITRLRAEGYEIARKHDGADLVVVNTCGFLDSARDESLNAIGSALSENGRVIVTGCLGAEPDVIREKHPNVLAITGPQAYESVMAAVHEAAPPSHDPYIDLLPPQGVKLTPRHYAYLKISEGCNNRCTFCIIPALRGDLVSRPAADVLREAEKLAKAGVKELLVISQDTSAYGIDIKYQTSMFGDREVRAKFLDLSEELGKLGIWVRMHYVYPYPHVADVIPLMAEGKILPYLDIPFQHASPQVLKNMRRPAHGEKTLERIRGWRDVCPDLAIRSTFIVGFPGETDEDFEMLLDWLDEAKIDRAGCFKYEPVKGARSNDLGLEQVPQDVKEARWHRFMQRQQKISATQLAKKVGKRLPVLIDEAHGTSAKGRTKYDAPEIDGSVHIQSRRPMRAGDIVTVKIERADAYDLYGSAV</sequence>
<dbReference type="EC" id="2.8.4.4" evidence="1"/>
<dbReference type="EMBL" id="BA000012">
    <property type="protein sequence ID" value="BAB48074.1"/>
    <property type="molecule type" value="Genomic_DNA"/>
</dbReference>
<dbReference type="RefSeq" id="WP_010909430.1">
    <property type="nucleotide sequence ID" value="NC_002678.2"/>
</dbReference>
<dbReference type="SMR" id="Q98MN9"/>
<dbReference type="KEGG" id="mlo:mlr0499"/>
<dbReference type="PATRIC" id="fig|266835.9.peg.400"/>
<dbReference type="eggNOG" id="COG0621">
    <property type="taxonomic scope" value="Bacteria"/>
</dbReference>
<dbReference type="HOGENOM" id="CLU_018697_0_0_5"/>
<dbReference type="Proteomes" id="UP000000552">
    <property type="component" value="Chromosome"/>
</dbReference>
<dbReference type="GO" id="GO:0005829">
    <property type="term" value="C:cytosol"/>
    <property type="evidence" value="ECO:0007669"/>
    <property type="project" value="TreeGrafter"/>
</dbReference>
<dbReference type="GO" id="GO:0051539">
    <property type="term" value="F:4 iron, 4 sulfur cluster binding"/>
    <property type="evidence" value="ECO:0007669"/>
    <property type="project" value="UniProtKB-UniRule"/>
</dbReference>
<dbReference type="GO" id="GO:0035599">
    <property type="term" value="F:aspartic acid methylthiotransferase activity"/>
    <property type="evidence" value="ECO:0007669"/>
    <property type="project" value="TreeGrafter"/>
</dbReference>
<dbReference type="GO" id="GO:0046872">
    <property type="term" value="F:metal ion binding"/>
    <property type="evidence" value="ECO:0007669"/>
    <property type="project" value="UniProtKB-KW"/>
</dbReference>
<dbReference type="GO" id="GO:0103039">
    <property type="term" value="F:protein methylthiotransferase activity"/>
    <property type="evidence" value="ECO:0007669"/>
    <property type="project" value="UniProtKB-EC"/>
</dbReference>
<dbReference type="GO" id="GO:0006400">
    <property type="term" value="P:tRNA modification"/>
    <property type="evidence" value="ECO:0007669"/>
    <property type="project" value="InterPro"/>
</dbReference>
<dbReference type="CDD" id="cd01335">
    <property type="entry name" value="Radical_SAM"/>
    <property type="match status" value="1"/>
</dbReference>
<dbReference type="FunFam" id="3.40.50.12160:FF:000002">
    <property type="entry name" value="Ribosomal protein S12 methylthiotransferase RimO"/>
    <property type="match status" value="1"/>
</dbReference>
<dbReference type="FunFam" id="3.80.30.20:FF:000001">
    <property type="entry name" value="tRNA-2-methylthio-N(6)-dimethylallyladenosine synthase 2"/>
    <property type="match status" value="1"/>
</dbReference>
<dbReference type="Gene3D" id="3.40.50.12160">
    <property type="entry name" value="Methylthiotransferase, N-terminal domain"/>
    <property type="match status" value="1"/>
</dbReference>
<dbReference type="Gene3D" id="2.40.50.140">
    <property type="entry name" value="Nucleic acid-binding proteins"/>
    <property type="match status" value="1"/>
</dbReference>
<dbReference type="Gene3D" id="3.80.30.20">
    <property type="entry name" value="tm_1862 like domain"/>
    <property type="match status" value="1"/>
</dbReference>
<dbReference type="HAMAP" id="MF_01865">
    <property type="entry name" value="MTTase_RimO"/>
    <property type="match status" value="1"/>
</dbReference>
<dbReference type="InterPro" id="IPR006638">
    <property type="entry name" value="Elp3/MiaA/NifB-like_rSAM"/>
</dbReference>
<dbReference type="InterPro" id="IPR005839">
    <property type="entry name" value="Methylthiotransferase"/>
</dbReference>
<dbReference type="InterPro" id="IPR020612">
    <property type="entry name" value="Methylthiotransferase_CS"/>
</dbReference>
<dbReference type="InterPro" id="IPR013848">
    <property type="entry name" value="Methylthiotransferase_N"/>
</dbReference>
<dbReference type="InterPro" id="IPR038135">
    <property type="entry name" value="Methylthiotransferase_N_sf"/>
</dbReference>
<dbReference type="InterPro" id="IPR012340">
    <property type="entry name" value="NA-bd_OB-fold"/>
</dbReference>
<dbReference type="InterPro" id="IPR005840">
    <property type="entry name" value="Ribosomal_uS12_MeSTrfase_RimO"/>
</dbReference>
<dbReference type="InterPro" id="IPR007197">
    <property type="entry name" value="rSAM"/>
</dbReference>
<dbReference type="InterPro" id="IPR023404">
    <property type="entry name" value="rSAM_horseshoe"/>
</dbReference>
<dbReference type="InterPro" id="IPR002792">
    <property type="entry name" value="TRAM_dom"/>
</dbReference>
<dbReference type="NCBIfam" id="TIGR01125">
    <property type="entry name" value="30S ribosomal protein S12 methylthiotransferase RimO"/>
    <property type="match status" value="1"/>
</dbReference>
<dbReference type="NCBIfam" id="TIGR00089">
    <property type="entry name" value="MiaB/RimO family radical SAM methylthiotransferase"/>
    <property type="match status" value="1"/>
</dbReference>
<dbReference type="PANTHER" id="PTHR43837">
    <property type="entry name" value="RIBOSOMAL PROTEIN S12 METHYLTHIOTRANSFERASE RIMO"/>
    <property type="match status" value="1"/>
</dbReference>
<dbReference type="PANTHER" id="PTHR43837:SF1">
    <property type="entry name" value="RIBOSOMAL PROTEIN US12 METHYLTHIOTRANSFERASE RIMO"/>
    <property type="match status" value="1"/>
</dbReference>
<dbReference type="Pfam" id="PF04055">
    <property type="entry name" value="Radical_SAM"/>
    <property type="match status" value="1"/>
</dbReference>
<dbReference type="Pfam" id="PF18693">
    <property type="entry name" value="TRAM_2"/>
    <property type="match status" value="1"/>
</dbReference>
<dbReference type="Pfam" id="PF00919">
    <property type="entry name" value="UPF0004"/>
    <property type="match status" value="1"/>
</dbReference>
<dbReference type="SFLD" id="SFLDG01082">
    <property type="entry name" value="B12-binding_domain_containing"/>
    <property type="match status" value="1"/>
</dbReference>
<dbReference type="SFLD" id="SFLDG01061">
    <property type="entry name" value="methylthiotransferase"/>
    <property type="match status" value="1"/>
</dbReference>
<dbReference type="SFLD" id="SFLDF00274">
    <property type="entry name" value="ribosomal_protein_S12_methylth"/>
    <property type="match status" value="1"/>
</dbReference>
<dbReference type="SMART" id="SM00729">
    <property type="entry name" value="Elp3"/>
    <property type="match status" value="1"/>
</dbReference>
<dbReference type="SUPFAM" id="SSF102114">
    <property type="entry name" value="Radical SAM enzymes"/>
    <property type="match status" value="1"/>
</dbReference>
<dbReference type="PROSITE" id="PS51449">
    <property type="entry name" value="MTTASE_N"/>
    <property type="match status" value="1"/>
</dbReference>
<dbReference type="PROSITE" id="PS01278">
    <property type="entry name" value="MTTASE_RADICAL"/>
    <property type="match status" value="1"/>
</dbReference>
<dbReference type="PROSITE" id="PS51918">
    <property type="entry name" value="RADICAL_SAM"/>
    <property type="match status" value="1"/>
</dbReference>
<dbReference type="PROSITE" id="PS50926">
    <property type="entry name" value="TRAM"/>
    <property type="match status" value="1"/>
</dbReference>
<proteinExistence type="inferred from homology"/>
<name>RIMO_RHILO</name>
<protein>
    <recommendedName>
        <fullName evidence="1">Ribosomal protein uS12 methylthiotransferase RimO</fullName>
        <shortName evidence="1">uS12 MTTase</shortName>
        <shortName evidence="1">uS12 methylthiotransferase</shortName>
        <ecNumber evidence="1">2.8.4.4</ecNumber>
    </recommendedName>
    <alternativeName>
        <fullName evidence="1">Ribosomal protein uS12 (aspartate-C(3))-methylthiotransferase</fullName>
    </alternativeName>
    <alternativeName>
        <fullName evidence="1">Ribosome maturation factor RimO</fullName>
    </alternativeName>
</protein>